<name>LEUC_RUEST</name>
<feature type="chain" id="PRO_1000063612" description="3-isopropylmalate dehydratase large subunit">
    <location>
        <begin position="1"/>
        <end position="467"/>
    </location>
</feature>
<feature type="binding site" evidence="1">
    <location>
        <position position="349"/>
    </location>
    <ligand>
        <name>[4Fe-4S] cluster</name>
        <dbReference type="ChEBI" id="CHEBI:49883"/>
    </ligand>
</feature>
<feature type="binding site" evidence="1">
    <location>
        <position position="409"/>
    </location>
    <ligand>
        <name>[4Fe-4S] cluster</name>
        <dbReference type="ChEBI" id="CHEBI:49883"/>
    </ligand>
</feature>
<feature type="binding site" evidence="1">
    <location>
        <position position="412"/>
    </location>
    <ligand>
        <name>[4Fe-4S] cluster</name>
        <dbReference type="ChEBI" id="CHEBI:49883"/>
    </ligand>
</feature>
<proteinExistence type="inferred from homology"/>
<evidence type="ECO:0000255" key="1">
    <source>
        <dbReference type="HAMAP-Rule" id="MF_01026"/>
    </source>
</evidence>
<protein>
    <recommendedName>
        <fullName evidence="1">3-isopropylmalate dehydratase large subunit</fullName>
        <ecNumber evidence="1">4.2.1.33</ecNumber>
    </recommendedName>
    <alternativeName>
        <fullName evidence="1">Alpha-IPM isomerase</fullName>
        <shortName evidence="1">IPMI</shortName>
    </alternativeName>
    <alternativeName>
        <fullName evidence="1">Isopropylmalate isomerase</fullName>
    </alternativeName>
</protein>
<sequence>MSPKTLYDKIWDAHVAQEAEDGTCLLYIDRHLVHEVTSPQAFEGLRMAGRKVHAPEKTIAVPDHNVPTTAGRENPDQMPEDSRIQVAALDTNAREFGVHYYPVTDIRQGIVHIVGPEQGWTLPGMTVVCGDSHTATHGAFGALAHGIGTSEVEHVLATQTLIQKKSKNMKVEITGKLSPGVTAKDIVLTIIGETGTGGGTGYVIEYCGEAIRDLSMEGRMTICNMAIEGGARAGLIAPDETTFEYVKGRPHAPKGAQWEAAVNWWKTLYSDDDAHWDKIVTIRGEDIAPTVTWGTSPEDALPITATVPAPEDFTGGKVEAARRALDYMGLTPGMKLSDIEIDTVFIGSCTNGRIEDLRAAADVVKGKKIKDGMRAMVVPGSGLVRAQAEEEGLAEIFKDAGFEWRLAGCSMCLAMNPDQLSEGERCASTSNRNFEGRQGFKGRTHLVSPAMAAAAAVTGKLTDVREL</sequence>
<accession>Q1GDM6</accession>
<organism>
    <name type="scientific">Ruegeria sp. (strain TM1040)</name>
    <name type="common">Silicibacter sp.</name>
    <dbReference type="NCBI Taxonomy" id="292414"/>
    <lineage>
        <taxon>Bacteria</taxon>
        <taxon>Pseudomonadati</taxon>
        <taxon>Pseudomonadota</taxon>
        <taxon>Alphaproteobacteria</taxon>
        <taxon>Rhodobacterales</taxon>
        <taxon>Roseobacteraceae</taxon>
        <taxon>Ruegeria</taxon>
    </lineage>
</organism>
<comment type="function">
    <text evidence="1">Catalyzes the isomerization between 2-isopropylmalate and 3-isopropylmalate, via the formation of 2-isopropylmaleate.</text>
</comment>
<comment type="catalytic activity">
    <reaction evidence="1">
        <text>(2R,3S)-3-isopropylmalate = (2S)-2-isopropylmalate</text>
        <dbReference type="Rhea" id="RHEA:32287"/>
        <dbReference type="ChEBI" id="CHEBI:1178"/>
        <dbReference type="ChEBI" id="CHEBI:35121"/>
        <dbReference type="EC" id="4.2.1.33"/>
    </reaction>
</comment>
<comment type="cofactor">
    <cofactor evidence="1">
        <name>[4Fe-4S] cluster</name>
        <dbReference type="ChEBI" id="CHEBI:49883"/>
    </cofactor>
    <text evidence="1">Binds 1 [4Fe-4S] cluster per subunit.</text>
</comment>
<comment type="pathway">
    <text evidence="1">Amino-acid biosynthesis; L-leucine biosynthesis; L-leucine from 3-methyl-2-oxobutanoate: step 2/4.</text>
</comment>
<comment type="subunit">
    <text evidence="1">Heterodimer of LeuC and LeuD.</text>
</comment>
<comment type="similarity">
    <text evidence="1">Belongs to the aconitase/IPM isomerase family. LeuC type 1 subfamily.</text>
</comment>
<dbReference type="EC" id="4.2.1.33" evidence="1"/>
<dbReference type="EMBL" id="CP000377">
    <property type="protein sequence ID" value="ABF65240.1"/>
    <property type="molecule type" value="Genomic_DNA"/>
</dbReference>
<dbReference type="RefSeq" id="WP_011539827.1">
    <property type="nucleotide sequence ID" value="NC_008044.1"/>
</dbReference>
<dbReference type="SMR" id="Q1GDM6"/>
<dbReference type="STRING" id="292414.TM1040_2508"/>
<dbReference type="KEGG" id="sit:TM1040_2508"/>
<dbReference type="eggNOG" id="COG0065">
    <property type="taxonomic scope" value="Bacteria"/>
</dbReference>
<dbReference type="HOGENOM" id="CLU_006714_3_4_5"/>
<dbReference type="OrthoDB" id="9802769at2"/>
<dbReference type="UniPathway" id="UPA00048">
    <property type="reaction ID" value="UER00071"/>
</dbReference>
<dbReference type="Proteomes" id="UP000000636">
    <property type="component" value="Chromosome"/>
</dbReference>
<dbReference type="GO" id="GO:0003861">
    <property type="term" value="F:3-isopropylmalate dehydratase activity"/>
    <property type="evidence" value="ECO:0007669"/>
    <property type="project" value="UniProtKB-UniRule"/>
</dbReference>
<dbReference type="GO" id="GO:0051539">
    <property type="term" value="F:4 iron, 4 sulfur cluster binding"/>
    <property type="evidence" value="ECO:0007669"/>
    <property type="project" value="UniProtKB-KW"/>
</dbReference>
<dbReference type="GO" id="GO:0046872">
    <property type="term" value="F:metal ion binding"/>
    <property type="evidence" value="ECO:0007669"/>
    <property type="project" value="UniProtKB-KW"/>
</dbReference>
<dbReference type="GO" id="GO:0009098">
    <property type="term" value="P:L-leucine biosynthetic process"/>
    <property type="evidence" value="ECO:0007669"/>
    <property type="project" value="UniProtKB-UniRule"/>
</dbReference>
<dbReference type="CDD" id="cd01583">
    <property type="entry name" value="IPMI"/>
    <property type="match status" value="1"/>
</dbReference>
<dbReference type="FunFam" id="3.30.499.10:FF:000006">
    <property type="entry name" value="3-isopropylmalate dehydratase large subunit"/>
    <property type="match status" value="1"/>
</dbReference>
<dbReference type="FunFam" id="3.30.499.10:FF:000007">
    <property type="entry name" value="3-isopropylmalate dehydratase large subunit"/>
    <property type="match status" value="1"/>
</dbReference>
<dbReference type="Gene3D" id="3.30.499.10">
    <property type="entry name" value="Aconitase, domain 3"/>
    <property type="match status" value="2"/>
</dbReference>
<dbReference type="HAMAP" id="MF_01026">
    <property type="entry name" value="LeuC_type1"/>
    <property type="match status" value="1"/>
</dbReference>
<dbReference type="InterPro" id="IPR004430">
    <property type="entry name" value="3-IsopropMal_deHydase_lsu"/>
</dbReference>
<dbReference type="InterPro" id="IPR015931">
    <property type="entry name" value="Acnase/IPM_dHydase_lsu_aba_1/3"/>
</dbReference>
<dbReference type="InterPro" id="IPR001030">
    <property type="entry name" value="Acoase/IPM_deHydtase_lsu_aba"/>
</dbReference>
<dbReference type="InterPro" id="IPR018136">
    <property type="entry name" value="Aconitase_4Fe-4S_BS"/>
</dbReference>
<dbReference type="InterPro" id="IPR036008">
    <property type="entry name" value="Aconitase_4Fe-4S_dom"/>
</dbReference>
<dbReference type="InterPro" id="IPR050067">
    <property type="entry name" value="IPM_dehydratase_rel_enz"/>
</dbReference>
<dbReference type="InterPro" id="IPR033941">
    <property type="entry name" value="IPMI_cat"/>
</dbReference>
<dbReference type="NCBIfam" id="TIGR00170">
    <property type="entry name" value="leuC"/>
    <property type="match status" value="1"/>
</dbReference>
<dbReference type="NCBIfam" id="NF004016">
    <property type="entry name" value="PRK05478.1"/>
    <property type="match status" value="1"/>
</dbReference>
<dbReference type="NCBIfam" id="NF009116">
    <property type="entry name" value="PRK12466.1"/>
    <property type="match status" value="1"/>
</dbReference>
<dbReference type="PANTHER" id="PTHR43822:SF9">
    <property type="entry name" value="3-ISOPROPYLMALATE DEHYDRATASE"/>
    <property type="match status" value="1"/>
</dbReference>
<dbReference type="PANTHER" id="PTHR43822">
    <property type="entry name" value="HOMOACONITASE, MITOCHONDRIAL-RELATED"/>
    <property type="match status" value="1"/>
</dbReference>
<dbReference type="Pfam" id="PF00330">
    <property type="entry name" value="Aconitase"/>
    <property type="match status" value="1"/>
</dbReference>
<dbReference type="PRINTS" id="PR00415">
    <property type="entry name" value="ACONITASE"/>
</dbReference>
<dbReference type="SUPFAM" id="SSF53732">
    <property type="entry name" value="Aconitase iron-sulfur domain"/>
    <property type="match status" value="1"/>
</dbReference>
<dbReference type="PROSITE" id="PS00450">
    <property type="entry name" value="ACONITASE_1"/>
    <property type="match status" value="1"/>
</dbReference>
<dbReference type="PROSITE" id="PS01244">
    <property type="entry name" value="ACONITASE_2"/>
    <property type="match status" value="1"/>
</dbReference>
<reference key="1">
    <citation type="submission" date="2006-05" db="EMBL/GenBank/DDBJ databases">
        <title>Complete sequence of chromosome of Silicibacter sp. TM1040.</title>
        <authorList>
            <consortium name="US DOE Joint Genome Institute"/>
            <person name="Copeland A."/>
            <person name="Lucas S."/>
            <person name="Lapidus A."/>
            <person name="Barry K."/>
            <person name="Detter J.C."/>
            <person name="Glavina del Rio T."/>
            <person name="Hammon N."/>
            <person name="Israni S."/>
            <person name="Dalin E."/>
            <person name="Tice H."/>
            <person name="Pitluck S."/>
            <person name="Brettin T."/>
            <person name="Bruce D."/>
            <person name="Han C."/>
            <person name="Tapia R."/>
            <person name="Goodwin L."/>
            <person name="Thompson L.S."/>
            <person name="Gilna P."/>
            <person name="Schmutz J."/>
            <person name="Larimer F."/>
            <person name="Land M."/>
            <person name="Hauser L."/>
            <person name="Kyrpides N."/>
            <person name="Kim E."/>
            <person name="Belas R."/>
            <person name="Moran M.A."/>
            <person name="Buchan A."/>
            <person name="Gonzalez J.M."/>
            <person name="Schell M.A."/>
            <person name="Sun F."/>
            <person name="Richardson P."/>
        </authorList>
    </citation>
    <scope>NUCLEOTIDE SEQUENCE [LARGE SCALE GENOMIC DNA]</scope>
    <source>
        <strain>TM1040</strain>
    </source>
</reference>
<keyword id="KW-0004">4Fe-4S</keyword>
<keyword id="KW-0028">Amino-acid biosynthesis</keyword>
<keyword id="KW-0100">Branched-chain amino acid biosynthesis</keyword>
<keyword id="KW-0408">Iron</keyword>
<keyword id="KW-0411">Iron-sulfur</keyword>
<keyword id="KW-0432">Leucine biosynthesis</keyword>
<keyword id="KW-0456">Lyase</keyword>
<keyword id="KW-0479">Metal-binding</keyword>
<keyword id="KW-1185">Reference proteome</keyword>
<gene>
    <name evidence="1" type="primary">leuC</name>
    <name type="ordered locus">TM1040_2508</name>
</gene>